<organism>
    <name type="scientific">Staphylococcus aureus (strain USA300 / TCH1516)</name>
    <dbReference type="NCBI Taxonomy" id="451516"/>
    <lineage>
        <taxon>Bacteria</taxon>
        <taxon>Bacillati</taxon>
        <taxon>Bacillota</taxon>
        <taxon>Bacilli</taxon>
        <taxon>Bacillales</taxon>
        <taxon>Staphylococcaceae</taxon>
        <taxon>Staphylococcus</taxon>
    </lineage>
</organism>
<protein>
    <recommendedName>
        <fullName evidence="1">Leucine--tRNA ligase</fullName>
        <ecNumber evidence="1">6.1.1.4</ecNumber>
    </recommendedName>
    <alternativeName>
        <fullName evidence="1">Leucyl-tRNA synthetase</fullName>
        <shortName evidence="1">LeuRS</shortName>
    </alternativeName>
</protein>
<feature type="chain" id="PRO_1000074847" description="Leucine--tRNA ligase">
    <location>
        <begin position="1"/>
        <end position="805"/>
    </location>
</feature>
<feature type="short sequence motif" description="'HIGH' region">
    <location>
        <begin position="41"/>
        <end position="52"/>
    </location>
</feature>
<feature type="short sequence motif" description="'KMSKS' region">
    <location>
        <begin position="577"/>
        <end position="581"/>
    </location>
</feature>
<feature type="binding site" evidence="1">
    <location>
        <position position="580"/>
    </location>
    <ligand>
        <name>ATP</name>
        <dbReference type="ChEBI" id="CHEBI:30616"/>
    </ligand>
</feature>
<gene>
    <name evidence="1" type="primary">leuS</name>
    <name type="ordered locus">USA300HOU_1749</name>
</gene>
<keyword id="KW-0030">Aminoacyl-tRNA synthetase</keyword>
<keyword id="KW-0067">ATP-binding</keyword>
<keyword id="KW-0963">Cytoplasm</keyword>
<keyword id="KW-0436">Ligase</keyword>
<keyword id="KW-0547">Nucleotide-binding</keyword>
<keyword id="KW-0648">Protein biosynthesis</keyword>
<reference key="1">
    <citation type="journal article" date="2007" name="BMC Microbiol.">
        <title>Subtle genetic changes enhance virulence of methicillin resistant and sensitive Staphylococcus aureus.</title>
        <authorList>
            <person name="Highlander S.K."/>
            <person name="Hulten K.G."/>
            <person name="Qin X."/>
            <person name="Jiang H."/>
            <person name="Yerrapragada S."/>
            <person name="Mason E.O. Jr."/>
            <person name="Shang Y."/>
            <person name="Williams T.M."/>
            <person name="Fortunov R.M."/>
            <person name="Liu Y."/>
            <person name="Igboeli O."/>
            <person name="Petrosino J."/>
            <person name="Tirumalai M."/>
            <person name="Uzman A."/>
            <person name="Fox G.E."/>
            <person name="Cardenas A.M."/>
            <person name="Muzny D.M."/>
            <person name="Hemphill L."/>
            <person name="Ding Y."/>
            <person name="Dugan S."/>
            <person name="Blyth P.R."/>
            <person name="Buhay C.J."/>
            <person name="Dinh H.H."/>
            <person name="Hawes A.C."/>
            <person name="Holder M."/>
            <person name="Kovar C.L."/>
            <person name="Lee S.L."/>
            <person name="Liu W."/>
            <person name="Nazareth L.V."/>
            <person name="Wang Q."/>
            <person name="Zhou J."/>
            <person name="Kaplan S.L."/>
            <person name="Weinstock G.M."/>
        </authorList>
    </citation>
    <scope>NUCLEOTIDE SEQUENCE [LARGE SCALE GENOMIC DNA]</scope>
    <source>
        <strain>USA300 / TCH1516</strain>
    </source>
</reference>
<evidence type="ECO:0000255" key="1">
    <source>
        <dbReference type="HAMAP-Rule" id="MF_00049"/>
    </source>
</evidence>
<proteinExistence type="inferred from homology"/>
<comment type="catalytic activity">
    <reaction evidence="1">
        <text>tRNA(Leu) + L-leucine + ATP = L-leucyl-tRNA(Leu) + AMP + diphosphate</text>
        <dbReference type="Rhea" id="RHEA:11688"/>
        <dbReference type="Rhea" id="RHEA-COMP:9613"/>
        <dbReference type="Rhea" id="RHEA-COMP:9622"/>
        <dbReference type="ChEBI" id="CHEBI:30616"/>
        <dbReference type="ChEBI" id="CHEBI:33019"/>
        <dbReference type="ChEBI" id="CHEBI:57427"/>
        <dbReference type="ChEBI" id="CHEBI:78442"/>
        <dbReference type="ChEBI" id="CHEBI:78494"/>
        <dbReference type="ChEBI" id="CHEBI:456215"/>
        <dbReference type="EC" id="6.1.1.4"/>
    </reaction>
</comment>
<comment type="subcellular location">
    <subcellularLocation>
        <location evidence="1">Cytoplasm</location>
    </subcellularLocation>
</comment>
<comment type="similarity">
    <text evidence="1">Belongs to the class-I aminoacyl-tRNA synthetase family.</text>
</comment>
<accession>A8Z4I6</accession>
<sequence length="805" mass="91786">MLNYNHNQIEKKWQDYWDENKTFKTNDNLGQKKFYALDMFPYPSGAGLHVGHPEGYTATDIISRYKRMQGYNVLHPMGWDAFGLPAEQYALDTGNDPREFTKKNIQTFKRQIKELGFSYDWDREVNTTDPEYYKWTQWIFIQLYNKGLAYVDEVAVNWCPALGTVLSNEEVIDGVSERGGHPVYRKPMKQWVLKITEYADQLLADLDDLDWPESLKDMQRNWIGRSEGAKVSFDVDNTEGKVEVFTTRPDTIYGASFLVLSPEHALVNSITTDEYKEKVKAYQTEASKKSDLERTDLAKDKSGVFTGAYATNPLSGEKVQIWIADYVLSTYGTGAIMAVPAHDDRDYEFAKKFDLPIIEVIEGGNVEEAAYTGEGKHINSGELDGLENEAAITKAIQLLEQKGAGEKKVNYKLRDWLFSRQRYWGEPIPVIHWEDGTMTTVPEEELPLLLPETDEIKPSGTGESPLANIDSFVNVVDEKTGMKGRRETNTMPQWAGSCWYYLRYIDPKNENMLADPEKLKHWLPVDLYIGGVEHAVLHLLYARFWHKVLYDLAIVPTKEPFQKLFNQGMILGEGNEKMSKSKGNVINPDDIVQSHGADTLRLYEMFMGPLDAAIAWSEKGLDGSRRFLDRVWRLMVNEDGTLSSKIVTTNNKSLDKVYNQTVKKVTEDFETLGFNTAISQLMVFINECYKVDEVYKPYIEGFVKMLAPIAPHIGEELWSKLGHEESITYQPWPTYDEALLVDDEVEIVVQVNGKLRAKIKIAKDTSKEEMQEIALSNDNVKASIEGKDIMKVIAVPQKLVNIVAK</sequence>
<dbReference type="EC" id="6.1.1.4" evidence="1"/>
<dbReference type="EMBL" id="CP000730">
    <property type="protein sequence ID" value="ABX29756.1"/>
    <property type="molecule type" value="Genomic_DNA"/>
</dbReference>
<dbReference type="RefSeq" id="WP_001549041.1">
    <property type="nucleotide sequence ID" value="NC_010079.1"/>
</dbReference>
<dbReference type="SMR" id="A8Z4I6"/>
<dbReference type="KEGG" id="sax:USA300HOU_1749"/>
<dbReference type="HOGENOM" id="CLU_004427_0_0_9"/>
<dbReference type="GO" id="GO:0005829">
    <property type="term" value="C:cytosol"/>
    <property type="evidence" value="ECO:0007669"/>
    <property type="project" value="TreeGrafter"/>
</dbReference>
<dbReference type="GO" id="GO:0002161">
    <property type="term" value="F:aminoacyl-tRNA deacylase activity"/>
    <property type="evidence" value="ECO:0007669"/>
    <property type="project" value="InterPro"/>
</dbReference>
<dbReference type="GO" id="GO:0005524">
    <property type="term" value="F:ATP binding"/>
    <property type="evidence" value="ECO:0007669"/>
    <property type="project" value="UniProtKB-UniRule"/>
</dbReference>
<dbReference type="GO" id="GO:0004823">
    <property type="term" value="F:leucine-tRNA ligase activity"/>
    <property type="evidence" value="ECO:0007669"/>
    <property type="project" value="UniProtKB-UniRule"/>
</dbReference>
<dbReference type="GO" id="GO:0006429">
    <property type="term" value="P:leucyl-tRNA aminoacylation"/>
    <property type="evidence" value="ECO:0007669"/>
    <property type="project" value="UniProtKB-UniRule"/>
</dbReference>
<dbReference type="CDD" id="cd07958">
    <property type="entry name" value="Anticodon_Ia_Leu_BEm"/>
    <property type="match status" value="1"/>
</dbReference>
<dbReference type="CDD" id="cd00812">
    <property type="entry name" value="LeuRS_core"/>
    <property type="match status" value="1"/>
</dbReference>
<dbReference type="FunFam" id="1.10.730.10:FF:000012">
    <property type="entry name" value="Leucine--tRNA ligase"/>
    <property type="match status" value="1"/>
</dbReference>
<dbReference type="FunFam" id="1.10.730.10:FF:000018">
    <property type="entry name" value="Leucine--tRNA ligase"/>
    <property type="match status" value="1"/>
</dbReference>
<dbReference type="FunFam" id="3.10.20.590:FF:000001">
    <property type="entry name" value="Leucine--tRNA ligase"/>
    <property type="match status" value="1"/>
</dbReference>
<dbReference type="FunFam" id="3.40.50.620:FF:000056">
    <property type="entry name" value="Leucine--tRNA ligase"/>
    <property type="match status" value="1"/>
</dbReference>
<dbReference type="FunFam" id="3.40.50.620:FF:000077">
    <property type="entry name" value="Leucine--tRNA ligase"/>
    <property type="match status" value="1"/>
</dbReference>
<dbReference type="Gene3D" id="3.10.20.590">
    <property type="match status" value="1"/>
</dbReference>
<dbReference type="Gene3D" id="3.40.50.620">
    <property type="entry name" value="HUPs"/>
    <property type="match status" value="2"/>
</dbReference>
<dbReference type="Gene3D" id="1.10.730.10">
    <property type="entry name" value="Isoleucyl-tRNA Synthetase, Domain 1"/>
    <property type="match status" value="1"/>
</dbReference>
<dbReference type="HAMAP" id="MF_00049_B">
    <property type="entry name" value="Leu_tRNA_synth_B"/>
    <property type="match status" value="1"/>
</dbReference>
<dbReference type="InterPro" id="IPR001412">
    <property type="entry name" value="aa-tRNA-synth_I_CS"/>
</dbReference>
<dbReference type="InterPro" id="IPR002300">
    <property type="entry name" value="aa-tRNA-synth_Ia"/>
</dbReference>
<dbReference type="InterPro" id="IPR002302">
    <property type="entry name" value="Leu-tRNA-ligase"/>
</dbReference>
<dbReference type="InterPro" id="IPR025709">
    <property type="entry name" value="Leu_tRNA-synth_edit"/>
</dbReference>
<dbReference type="InterPro" id="IPR013155">
    <property type="entry name" value="M/V/L/I-tRNA-synth_anticd-bd"/>
</dbReference>
<dbReference type="InterPro" id="IPR015413">
    <property type="entry name" value="Methionyl/Leucyl_tRNA_Synth"/>
</dbReference>
<dbReference type="InterPro" id="IPR014729">
    <property type="entry name" value="Rossmann-like_a/b/a_fold"/>
</dbReference>
<dbReference type="InterPro" id="IPR009080">
    <property type="entry name" value="tRNAsynth_Ia_anticodon-bd"/>
</dbReference>
<dbReference type="InterPro" id="IPR009008">
    <property type="entry name" value="Val/Leu/Ile-tRNA-synth_edit"/>
</dbReference>
<dbReference type="NCBIfam" id="TIGR00396">
    <property type="entry name" value="leuS_bact"/>
    <property type="match status" value="1"/>
</dbReference>
<dbReference type="PANTHER" id="PTHR43740:SF2">
    <property type="entry name" value="LEUCINE--TRNA LIGASE, MITOCHONDRIAL"/>
    <property type="match status" value="1"/>
</dbReference>
<dbReference type="PANTHER" id="PTHR43740">
    <property type="entry name" value="LEUCYL-TRNA SYNTHETASE"/>
    <property type="match status" value="1"/>
</dbReference>
<dbReference type="Pfam" id="PF08264">
    <property type="entry name" value="Anticodon_1"/>
    <property type="match status" value="1"/>
</dbReference>
<dbReference type="Pfam" id="PF00133">
    <property type="entry name" value="tRNA-synt_1"/>
    <property type="match status" value="1"/>
</dbReference>
<dbReference type="Pfam" id="PF13603">
    <property type="entry name" value="tRNA-synt_1_2"/>
    <property type="match status" value="1"/>
</dbReference>
<dbReference type="Pfam" id="PF09334">
    <property type="entry name" value="tRNA-synt_1g"/>
    <property type="match status" value="1"/>
</dbReference>
<dbReference type="PRINTS" id="PR00985">
    <property type="entry name" value="TRNASYNTHLEU"/>
</dbReference>
<dbReference type="SUPFAM" id="SSF47323">
    <property type="entry name" value="Anticodon-binding domain of a subclass of class I aminoacyl-tRNA synthetases"/>
    <property type="match status" value="1"/>
</dbReference>
<dbReference type="SUPFAM" id="SSF52374">
    <property type="entry name" value="Nucleotidylyl transferase"/>
    <property type="match status" value="1"/>
</dbReference>
<dbReference type="SUPFAM" id="SSF50677">
    <property type="entry name" value="ValRS/IleRS/LeuRS editing domain"/>
    <property type="match status" value="1"/>
</dbReference>
<dbReference type="PROSITE" id="PS00178">
    <property type="entry name" value="AA_TRNA_LIGASE_I"/>
    <property type="match status" value="1"/>
</dbReference>
<name>SYL_STAAT</name>